<gene>
    <name evidence="1" type="primary">leuD</name>
    <name type="ordered locus">Tfu_0627</name>
</gene>
<evidence type="ECO:0000255" key="1">
    <source>
        <dbReference type="HAMAP-Rule" id="MF_01031"/>
    </source>
</evidence>
<dbReference type="EC" id="4.2.1.33" evidence="1"/>
<dbReference type="EMBL" id="CP000088">
    <property type="protein sequence ID" value="AAZ54665.1"/>
    <property type="molecule type" value="Genomic_DNA"/>
</dbReference>
<dbReference type="RefSeq" id="WP_011291074.1">
    <property type="nucleotide sequence ID" value="NC_007333.1"/>
</dbReference>
<dbReference type="SMR" id="Q47SA2"/>
<dbReference type="STRING" id="269800.Tfu_0627"/>
<dbReference type="KEGG" id="tfu:Tfu_0627"/>
<dbReference type="eggNOG" id="COG0066">
    <property type="taxonomic scope" value="Bacteria"/>
</dbReference>
<dbReference type="HOGENOM" id="CLU_081378_0_1_11"/>
<dbReference type="OrthoDB" id="9777465at2"/>
<dbReference type="UniPathway" id="UPA00048">
    <property type="reaction ID" value="UER00071"/>
</dbReference>
<dbReference type="GO" id="GO:0009316">
    <property type="term" value="C:3-isopropylmalate dehydratase complex"/>
    <property type="evidence" value="ECO:0007669"/>
    <property type="project" value="InterPro"/>
</dbReference>
<dbReference type="GO" id="GO:0003861">
    <property type="term" value="F:3-isopropylmalate dehydratase activity"/>
    <property type="evidence" value="ECO:0007669"/>
    <property type="project" value="UniProtKB-UniRule"/>
</dbReference>
<dbReference type="GO" id="GO:0009098">
    <property type="term" value="P:L-leucine biosynthetic process"/>
    <property type="evidence" value="ECO:0007669"/>
    <property type="project" value="UniProtKB-UniRule"/>
</dbReference>
<dbReference type="CDD" id="cd01577">
    <property type="entry name" value="IPMI_Swivel"/>
    <property type="match status" value="1"/>
</dbReference>
<dbReference type="FunFam" id="3.20.19.10:FF:000003">
    <property type="entry name" value="3-isopropylmalate dehydratase small subunit"/>
    <property type="match status" value="1"/>
</dbReference>
<dbReference type="Gene3D" id="3.20.19.10">
    <property type="entry name" value="Aconitase, domain 4"/>
    <property type="match status" value="1"/>
</dbReference>
<dbReference type="HAMAP" id="MF_01031">
    <property type="entry name" value="LeuD_type1"/>
    <property type="match status" value="1"/>
</dbReference>
<dbReference type="InterPro" id="IPR004431">
    <property type="entry name" value="3-IsopropMal_deHydase_ssu"/>
</dbReference>
<dbReference type="InterPro" id="IPR015928">
    <property type="entry name" value="Aconitase/3IPM_dehydase_swvl"/>
</dbReference>
<dbReference type="InterPro" id="IPR000573">
    <property type="entry name" value="AconitaseA/IPMdHydase_ssu_swvl"/>
</dbReference>
<dbReference type="InterPro" id="IPR033940">
    <property type="entry name" value="IPMI_Swivel"/>
</dbReference>
<dbReference type="InterPro" id="IPR050075">
    <property type="entry name" value="LeuD"/>
</dbReference>
<dbReference type="NCBIfam" id="TIGR00171">
    <property type="entry name" value="leuD"/>
    <property type="match status" value="1"/>
</dbReference>
<dbReference type="NCBIfam" id="NF002458">
    <property type="entry name" value="PRK01641.1"/>
    <property type="match status" value="1"/>
</dbReference>
<dbReference type="PANTHER" id="PTHR43345:SF5">
    <property type="entry name" value="3-ISOPROPYLMALATE DEHYDRATASE SMALL SUBUNIT"/>
    <property type="match status" value="1"/>
</dbReference>
<dbReference type="PANTHER" id="PTHR43345">
    <property type="entry name" value="3-ISOPROPYLMALATE DEHYDRATASE SMALL SUBUNIT 2-RELATED-RELATED"/>
    <property type="match status" value="1"/>
</dbReference>
<dbReference type="Pfam" id="PF00694">
    <property type="entry name" value="Aconitase_C"/>
    <property type="match status" value="1"/>
</dbReference>
<dbReference type="SUPFAM" id="SSF52016">
    <property type="entry name" value="LeuD/IlvD-like"/>
    <property type="match status" value="1"/>
</dbReference>
<reference key="1">
    <citation type="journal article" date="2007" name="J. Bacteriol.">
        <title>Genome sequence and analysis of the soil cellulolytic actinomycete Thermobifida fusca YX.</title>
        <authorList>
            <person name="Lykidis A."/>
            <person name="Mavromatis K."/>
            <person name="Ivanova N."/>
            <person name="Anderson I."/>
            <person name="Land M."/>
            <person name="DiBartolo G."/>
            <person name="Martinez M."/>
            <person name="Lapidus A."/>
            <person name="Lucas S."/>
            <person name="Copeland A."/>
            <person name="Richardson P."/>
            <person name="Wilson D.B."/>
            <person name="Kyrpides N."/>
        </authorList>
    </citation>
    <scope>NUCLEOTIDE SEQUENCE [LARGE SCALE GENOMIC DNA]</scope>
    <source>
        <strain>YX</strain>
    </source>
</reference>
<organism>
    <name type="scientific">Thermobifida fusca (strain YX)</name>
    <dbReference type="NCBI Taxonomy" id="269800"/>
    <lineage>
        <taxon>Bacteria</taxon>
        <taxon>Bacillati</taxon>
        <taxon>Actinomycetota</taxon>
        <taxon>Actinomycetes</taxon>
        <taxon>Streptosporangiales</taxon>
        <taxon>Nocardiopsidaceae</taxon>
        <taxon>Thermobifida</taxon>
    </lineage>
</organism>
<proteinExistence type="inferred from homology"/>
<feature type="chain" id="PRO_0000141901" description="3-isopropylmalate dehydratase small subunit">
    <location>
        <begin position="1"/>
        <end position="195"/>
    </location>
</feature>
<keyword id="KW-0028">Amino-acid biosynthesis</keyword>
<keyword id="KW-0100">Branched-chain amino acid biosynthesis</keyword>
<keyword id="KW-0432">Leucine biosynthesis</keyword>
<keyword id="KW-0456">Lyase</keyword>
<comment type="function">
    <text evidence="1">Catalyzes the isomerization between 2-isopropylmalate and 3-isopropylmalate, via the formation of 2-isopropylmaleate.</text>
</comment>
<comment type="catalytic activity">
    <reaction evidence="1">
        <text>(2R,3S)-3-isopropylmalate = (2S)-2-isopropylmalate</text>
        <dbReference type="Rhea" id="RHEA:32287"/>
        <dbReference type="ChEBI" id="CHEBI:1178"/>
        <dbReference type="ChEBI" id="CHEBI:35121"/>
        <dbReference type="EC" id="4.2.1.33"/>
    </reaction>
</comment>
<comment type="pathway">
    <text evidence="1">Amino-acid biosynthesis; L-leucine biosynthesis; L-leucine from 3-methyl-2-oxobutanoate: step 2/4.</text>
</comment>
<comment type="subunit">
    <text evidence="1">Heterodimer of LeuC and LeuD.</text>
</comment>
<comment type="similarity">
    <text evidence="1">Belongs to the LeuD family. LeuD type 1 subfamily.</text>
</comment>
<sequence>MEKFTVHTGRAVPLRYSNVDTDQIIPAVYLKRVTRTGFEDGLFAAWRTDPDFVLNKPEYKDGTILIAGPDFGTGSSREHAVWALQNYGFKAVLSSRFADIFRGNSLKGGLLTVVLPQPVIEQLWEMVEADPATEITVDLVNREVRAKDIVEPFELDDYTRWRLMEGLDDIDLTLRHVDAIAEYEKRRKPWLPVTQ</sequence>
<name>LEUD_THEFY</name>
<accession>Q47SA2</accession>
<protein>
    <recommendedName>
        <fullName evidence="1">3-isopropylmalate dehydratase small subunit</fullName>
        <ecNumber evidence="1">4.2.1.33</ecNumber>
    </recommendedName>
    <alternativeName>
        <fullName evidence="1">Alpha-IPM isomerase</fullName>
        <shortName evidence="1">IPMI</shortName>
    </alternativeName>
    <alternativeName>
        <fullName evidence="1">Isopropylmalate isomerase</fullName>
    </alternativeName>
</protein>